<dbReference type="EC" id="2.1.2.9" evidence="1"/>
<dbReference type="EMBL" id="CP000423">
    <property type="protein sequence ID" value="ABJ70399.1"/>
    <property type="molecule type" value="Genomic_DNA"/>
</dbReference>
<dbReference type="RefSeq" id="WP_011674552.1">
    <property type="nucleotide sequence ID" value="NC_008526.1"/>
</dbReference>
<dbReference type="RefSeq" id="YP_806841.1">
    <property type="nucleotide sequence ID" value="NC_008526.1"/>
</dbReference>
<dbReference type="SMR" id="Q038H3"/>
<dbReference type="STRING" id="321967.LSEI_1625"/>
<dbReference type="PaxDb" id="321967-LSEI_1625"/>
<dbReference type="KEGG" id="lca:LSEI_1625"/>
<dbReference type="PATRIC" id="fig|321967.11.peg.1606"/>
<dbReference type="HOGENOM" id="CLU_033347_1_1_9"/>
<dbReference type="Proteomes" id="UP000001651">
    <property type="component" value="Chromosome"/>
</dbReference>
<dbReference type="GO" id="GO:0005829">
    <property type="term" value="C:cytosol"/>
    <property type="evidence" value="ECO:0007669"/>
    <property type="project" value="TreeGrafter"/>
</dbReference>
<dbReference type="GO" id="GO:0004479">
    <property type="term" value="F:methionyl-tRNA formyltransferase activity"/>
    <property type="evidence" value="ECO:0007669"/>
    <property type="project" value="UniProtKB-UniRule"/>
</dbReference>
<dbReference type="CDD" id="cd08646">
    <property type="entry name" value="FMT_core_Met-tRNA-FMT_N"/>
    <property type="match status" value="1"/>
</dbReference>
<dbReference type="CDD" id="cd08704">
    <property type="entry name" value="Met_tRNA_FMT_C"/>
    <property type="match status" value="1"/>
</dbReference>
<dbReference type="Gene3D" id="3.40.50.12230">
    <property type="match status" value="1"/>
</dbReference>
<dbReference type="HAMAP" id="MF_00182">
    <property type="entry name" value="Formyl_trans"/>
    <property type="match status" value="1"/>
</dbReference>
<dbReference type="InterPro" id="IPR005794">
    <property type="entry name" value="Fmt"/>
</dbReference>
<dbReference type="InterPro" id="IPR005793">
    <property type="entry name" value="Formyl_trans_C"/>
</dbReference>
<dbReference type="InterPro" id="IPR002376">
    <property type="entry name" value="Formyl_transf_N"/>
</dbReference>
<dbReference type="InterPro" id="IPR036477">
    <property type="entry name" value="Formyl_transf_N_sf"/>
</dbReference>
<dbReference type="InterPro" id="IPR011034">
    <property type="entry name" value="Formyl_transferase-like_C_sf"/>
</dbReference>
<dbReference type="InterPro" id="IPR044135">
    <property type="entry name" value="Met-tRNA-FMT_C"/>
</dbReference>
<dbReference type="InterPro" id="IPR041711">
    <property type="entry name" value="Met-tRNA-FMT_N"/>
</dbReference>
<dbReference type="NCBIfam" id="TIGR00460">
    <property type="entry name" value="fmt"/>
    <property type="match status" value="1"/>
</dbReference>
<dbReference type="PANTHER" id="PTHR11138">
    <property type="entry name" value="METHIONYL-TRNA FORMYLTRANSFERASE"/>
    <property type="match status" value="1"/>
</dbReference>
<dbReference type="PANTHER" id="PTHR11138:SF5">
    <property type="entry name" value="METHIONYL-TRNA FORMYLTRANSFERASE, MITOCHONDRIAL"/>
    <property type="match status" value="1"/>
</dbReference>
<dbReference type="Pfam" id="PF02911">
    <property type="entry name" value="Formyl_trans_C"/>
    <property type="match status" value="1"/>
</dbReference>
<dbReference type="Pfam" id="PF00551">
    <property type="entry name" value="Formyl_trans_N"/>
    <property type="match status" value="1"/>
</dbReference>
<dbReference type="SUPFAM" id="SSF50486">
    <property type="entry name" value="FMT C-terminal domain-like"/>
    <property type="match status" value="1"/>
</dbReference>
<dbReference type="SUPFAM" id="SSF53328">
    <property type="entry name" value="Formyltransferase"/>
    <property type="match status" value="1"/>
</dbReference>
<accession>Q038H3</accession>
<reference key="1">
    <citation type="journal article" date="2006" name="Proc. Natl. Acad. Sci. U.S.A.">
        <title>Comparative genomics of the lactic acid bacteria.</title>
        <authorList>
            <person name="Makarova K.S."/>
            <person name="Slesarev A."/>
            <person name="Wolf Y.I."/>
            <person name="Sorokin A."/>
            <person name="Mirkin B."/>
            <person name="Koonin E.V."/>
            <person name="Pavlov A."/>
            <person name="Pavlova N."/>
            <person name="Karamychev V."/>
            <person name="Polouchine N."/>
            <person name="Shakhova V."/>
            <person name="Grigoriev I."/>
            <person name="Lou Y."/>
            <person name="Rohksar D."/>
            <person name="Lucas S."/>
            <person name="Huang K."/>
            <person name="Goodstein D.M."/>
            <person name="Hawkins T."/>
            <person name="Plengvidhya V."/>
            <person name="Welker D."/>
            <person name="Hughes J."/>
            <person name="Goh Y."/>
            <person name="Benson A."/>
            <person name="Baldwin K."/>
            <person name="Lee J.-H."/>
            <person name="Diaz-Muniz I."/>
            <person name="Dosti B."/>
            <person name="Smeianov V."/>
            <person name="Wechter W."/>
            <person name="Barabote R."/>
            <person name="Lorca G."/>
            <person name="Altermann E."/>
            <person name="Barrangou R."/>
            <person name="Ganesan B."/>
            <person name="Xie Y."/>
            <person name="Rawsthorne H."/>
            <person name="Tamir D."/>
            <person name="Parker C."/>
            <person name="Breidt F."/>
            <person name="Broadbent J.R."/>
            <person name="Hutkins R."/>
            <person name="O'Sullivan D."/>
            <person name="Steele J."/>
            <person name="Unlu G."/>
            <person name="Saier M.H. Jr."/>
            <person name="Klaenhammer T."/>
            <person name="Richardson P."/>
            <person name="Kozyavkin S."/>
            <person name="Weimer B.C."/>
            <person name="Mills D.A."/>
        </authorList>
    </citation>
    <scope>NUCLEOTIDE SEQUENCE [LARGE SCALE GENOMIC DNA]</scope>
    <source>
        <strain>ATCC 334 / BCRC 17002 / CCUG 31169 / CIP 107868 / KCTC 3260 / NRRL B-441</strain>
    </source>
</reference>
<comment type="function">
    <text evidence="1">Attaches a formyl group to the free amino group of methionyl-tRNA(fMet). The formyl group appears to play a dual role in the initiator identity of N-formylmethionyl-tRNA by promoting its recognition by IF2 and preventing the misappropriation of this tRNA by the elongation apparatus.</text>
</comment>
<comment type="catalytic activity">
    <reaction evidence="1">
        <text>L-methionyl-tRNA(fMet) + (6R)-10-formyltetrahydrofolate = N-formyl-L-methionyl-tRNA(fMet) + (6S)-5,6,7,8-tetrahydrofolate + H(+)</text>
        <dbReference type="Rhea" id="RHEA:24380"/>
        <dbReference type="Rhea" id="RHEA-COMP:9952"/>
        <dbReference type="Rhea" id="RHEA-COMP:9953"/>
        <dbReference type="ChEBI" id="CHEBI:15378"/>
        <dbReference type="ChEBI" id="CHEBI:57453"/>
        <dbReference type="ChEBI" id="CHEBI:78530"/>
        <dbReference type="ChEBI" id="CHEBI:78844"/>
        <dbReference type="ChEBI" id="CHEBI:195366"/>
        <dbReference type="EC" id="2.1.2.9"/>
    </reaction>
</comment>
<comment type="similarity">
    <text evidence="1">Belongs to the Fmt family.</text>
</comment>
<organism>
    <name type="scientific">Lacticaseibacillus paracasei (strain ATCC 334 / BCRC 17002 / CCUG 31169 / CIP 107868 / KCTC 3260 / NRRL B-441)</name>
    <name type="common">Lactobacillus paracasei</name>
    <dbReference type="NCBI Taxonomy" id="321967"/>
    <lineage>
        <taxon>Bacteria</taxon>
        <taxon>Bacillati</taxon>
        <taxon>Bacillota</taxon>
        <taxon>Bacilli</taxon>
        <taxon>Lactobacillales</taxon>
        <taxon>Lactobacillaceae</taxon>
        <taxon>Lacticaseibacillus</taxon>
    </lineage>
</organism>
<protein>
    <recommendedName>
        <fullName evidence="1">Methionyl-tRNA formyltransferase</fullName>
        <ecNumber evidence="1">2.1.2.9</ecNumber>
    </recommendedName>
</protein>
<gene>
    <name evidence="1" type="primary">fmt</name>
    <name type="ordered locus">LSEI_1625</name>
</gene>
<keyword id="KW-0648">Protein biosynthesis</keyword>
<keyword id="KW-1185">Reference proteome</keyword>
<keyword id="KW-0808">Transferase</keyword>
<sequence length="318" mass="34355">MTSVIFLGTPEFAVPILEGLIAQHYDILAVMTQPDRKVGRKLRLAASPVKQAAQKHDIPVLQPEKLSGSPELAQAIAMAPDLIVTAAYGQFLPTKFLEAAKIIAVNVHGSLLPKYRGGAPIQYSIMNGDSETGVTIIEMVKKMDAGDMFAQAKLPLTRADDTGTVFAKLSLLGRDLLLETLPKIIAGTATRTPQDPDKVTFSPTITKEQEHLNIHLPAKALDQWIRALRPDVGGYVYLNGQRTKLWAITPLSAGSTLPAGSIVERDKHRLVMVAGQQTTFQVDELQPAGKAKQSIADFLNGPGQQLVSGQQVITDDPE</sequence>
<evidence type="ECO:0000255" key="1">
    <source>
        <dbReference type="HAMAP-Rule" id="MF_00182"/>
    </source>
</evidence>
<proteinExistence type="inferred from homology"/>
<name>FMT_LACP3</name>
<feature type="chain" id="PRO_1000020084" description="Methionyl-tRNA formyltransferase">
    <location>
        <begin position="1"/>
        <end position="318"/>
    </location>
</feature>
<feature type="binding site" evidence="1">
    <location>
        <begin position="110"/>
        <end position="113"/>
    </location>
    <ligand>
        <name>(6S)-5,6,7,8-tetrahydrofolate</name>
        <dbReference type="ChEBI" id="CHEBI:57453"/>
    </ligand>
</feature>